<organism>
    <name type="scientific">Vigna unguiculata</name>
    <name type="common">Cowpea</name>
    <dbReference type="NCBI Taxonomy" id="3917"/>
    <lineage>
        <taxon>Eukaryota</taxon>
        <taxon>Viridiplantae</taxon>
        <taxon>Streptophyta</taxon>
        <taxon>Embryophyta</taxon>
        <taxon>Tracheophyta</taxon>
        <taxon>Spermatophyta</taxon>
        <taxon>Magnoliopsida</taxon>
        <taxon>eudicotyledons</taxon>
        <taxon>Gunneridae</taxon>
        <taxon>Pentapetalae</taxon>
        <taxon>rosids</taxon>
        <taxon>fabids</taxon>
        <taxon>Fabales</taxon>
        <taxon>Fabaceae</taxon>
        <taxon>Papilionoideae</taxon>
        <taxon>50 kb inversion clade</taxon>
        <taxon>NPAAA clade</taxon>
        <taxon>indigoferoid/millettioid clade</taxon>
        <taxon>Phaseoleae</taxon>
        <taxon>Vigna</taxon>
    </lineage>
</organism>
<evidence type="ECO:0000250" key="1"/>
<evidence type="ECO:0000255" key="2"/>
<evidence type="ECO:0000305" key="3"/>
<comment type="function">
    <text evidence="1">Regulates membrane-cell wall junctions and localized cell wall deposition. Required for establishment of the Casparian strip membrane domain (CSD) and the subsequent formation of Casparian strips, a cell wall modification of the root endodermis that determines an apoplastic barrier between the intraorganismal apoplasm and the extraorganismal apoplasm and prevents lateral diffusion (By similarity).</text>
</comment>
<comment type="subunit">
    <text evidence="1">Homodimer and heterodimers.</text>
</comment>
<comment type="subcellular location">
    <subcellularLocation>
        <location evidence="1">Cell membrane</location>
        <topology evidence="1">Multi-pass membrane protein</topology>
    </subcellularLocation>
    <text evidence="1">Very restricted localization following a belt shape within the plasma membrane which coincides with the position of the Casparian strip membrane domain in the root endodermis.</text>
</comment>
<comment type="similarity">
    <text evidence="3">Belongs to the Casparian strip membrane proteins (CASP) family.</text>
</comment>
<sequence length="192" mass="20282">MSTTVDVPESSNVAKGKAIAVARPGGWKKGLAIMDFILRLGGIAASLGAAATMGTSDQTLPFFTQFFQFEASYDSFTTFQFFVITMALVAGYLVLSLPFSVVAIIRPHAPGPRLFLIILDTVFLTLATASGASAAAIVYLAHNGNQDSNWLAICNQFGDFCAQTSGAVVASFVAVVILVLLVIMSALALRRH</sequence>
<protein>
    <recommendedName>
        <fullName>Casparian strip membrane protein 1</fullName>
        <shortName>VuCASP1</shortName>
    </recommendedName>
</protein>
<accession>P0DI40</accession>
<feature type="chain" id="PRO_0000417815" description="Casparian strip membrane protein 1">
    <location>
        <begin position="1"/>
        <end position="192"/>
    </location>
</feature>
<feature type="topological domain" description="Cytoplasmic" evidence="2">
    <location>
        <begin position="1"/>
        <end position="30"/>
    </location>
</feature>
<feature type="transmembrane region" description="Helical" evidence="2">
    <location>
        <begin position="31"/>
        <end position="51"/>
    </location>
</feature>
<feature type="topological domain" description="Extracellular" evidence="2">
    <location>
        <begin position="52"/>
        <end position="80"/>
    </location>
</feature>
<feature type="transmembrane region" description="Helical" evidence="2">
    <location>
        <begin position="81"/>
        <end position="101"/>
    </location>
</feature>
<feature type="topological domain" description="Cytoplasmic" evidence="2">
    <location>
        <begin position="102"/>
        <end position="113"/>
    </location>
</feature>
<feature type="transmembrane region" description="Helical" evidence="2">
    <location>
        <begin position="114"/>
        <end position="134"/>
    </location>
</feature>
<feature type="topological domain" description="Extracellular" evidence="2">
    <location>
        <begin position="135"/>
        <end position="166"/>
    </location>
</feature>
<feature type="transmembrane region" description="Helical" evidence="2">
    <location>
        <begin position="167"/>
        <end position="187"/>
    </location>
</feature>
<feature type="topological domain" description="Cytoplasmic" evidence="2">
    <location>
        <begin position="188"/>
        <end position="192"/>
    </location>
</feature>
<reference key="1">
    <citation type="submission" date="2008-06" db="EMBL/GenBank/DDBJ databases">
        <title>Development of cowpea 524B mixed tissue and conditions ESTs.</title>
        <authorList>
            <person name="Close T.J."/>
            <person name="Fenton R.D."/>
            <person name="Ehlers J.D."/>
            <person name="Roberts P.A."/>
            <person name="Wanamaker S."/>
            <person name="Bristow J."/>
            <person name="Wang M."/>
            <person name="Lucas S."/>
            <person name="Lindquist E.A."/>
            <person name="Pennacchio C."/>
        </authorList>
    </citation>
    <scope>NUCLEOTIDE SEQUENCE [LARGE SCALE MRNA]</scope>
    <source>
        <strain>cv. 524B</strain>
        <tissue>Seedling</tissue>
    </source>
</reference>
<reference key="2">
    <citation type="journal article" date="2014" name="Plant Physiol.">
        <title>Functional and evolutionary analysis of the CASPARIAN STRIP MEMBRANE DOMAIN PROTEIN family.</title>
        <authorList>
            <person name="Roppolo D."/>
            <person name="Boeckmann B."/>
            <person name="Pfister A."/>
            <person name="Boutet E."/>
            <person name="Rubio M.C."/>
            <person name="Denervaud-Tendon V."/>
            <person name="Vermeer J.E."/>
            <person name="Gheyselinck J."/>
            <person name="Xenarios I."/>
            <person name="Geldner N."/>
        </authorList>
    </citation>
    <scope>GENE FAMILY</scope>
    <scope>NOMENCLATURE</scope>
</reference>
<name>CASP1_VIGUN</name>
<dbReference type="EMBL" id="FG831912">
    <property type="status" value="NOT_ANNOTATED_CDS"/>
    <property type="molecule type" value="mRNA"/>
</dbReference>
<dbReference type="RefSeq" id="XP_027937839.1">
    <property type="nucleotide sequence ID" value="XM_028082038.1"/>
</dbReference>
<dbReference type="RefSeq" id="XP_027937891.1">
    <property type="nucleotide sequence ID" value="XM_028082090.1"/>
</dbReference>
<dbReference type="SMR" id="P0DI40"/>
<dbReference type="EnsemblPlants" id="Vigun07g077600.1.v1.2">
    <property type="protein sequence ID" value="Vigun07g077600.1.v1.2"/>
    <property type="gene ID" value="Vigun07g077600.v1.2"/>
</dbReference>
<dbReference type="EnsemblPlants" id="Vigun07g077700.1.v1.2">
    <property type="protein sequence ID" value="Vigun07g077700.1.v1.2"/>
    <property type="gene ID" value="Vigun07g077700.v1.2"/>
</dbReference>
<dbReference type="GeneID" id="114192343"/>
<dbReference type="GeneID" id="114192383"/>
<dbReference type="Gramene" id="Vigun07g077600.1.v1.2">
    <property type="protein sequence ID" value="Vigun07g077600.1.v1.2"/>
    <property type="gene ID" value="Vigun07g077600.v1.2"/>
</dbReference>
<dbReference type="Gramene" id="Vigun07g077700.1.v1.2">
    <property type="protein sequence ID" value="Vigun07g077700.1.v1.2"/>
    <property type="gene ID" value="Vigun07g077700.v1.2"/>
</dbReference>
<dbReference type="OrthoDB" id="753675at2759"/>
<dbReference type="GO" id="GO:0005886">
    <property type="term" value="C:plasma membrane"/>
    <property type="evidence" value="ECO:0007669"/>
    <property type="project" value="UniProtKB-SubCell"/>
</dbReference>
<dbReference type="GO" id="GO:0071555">
    <property type="term" value="P:cell wall organization"/>
    <property type="evidence" value="ECO:0007669"/>
    <property type="project" value="UniProtKB-KW"/>
</dbReference>
<dbReference type="InterPro" id="IPR006459">
    <property type="entry name" value="CASP/CASPL"/>
</dbReference>
<dbReference type="InterPro" id="IPR006702">
    <property type="entry name" value="CASP_dom"/>
</dbReference>
<dbReference type="InterPro" id="IPR044173">
    <property type="entry name" value="CASPL"/>
</dbReference>
<dbReference type="NCBIfam" id="TIGR01569">
    <property type="entry name" value="A_tha_TIGR01569"/>
    <property type="match status" value="1"/>
</dbReference>
<dbReference type="PANTHER" id="PTHR36488:SF11">
    <property type="entry name" value="CASP-LIKE PROTEIN"/>
    <property type="match status" value="1"/>
</dbReference>
<dbReference type="PANTHER" id="PTHR36488">
    <property type="entry name" value="CASP-LIKE PROTEIN 1U1"/>
    <property type="match status" value="1"/>
</dbReference>
<dbReference type="Pfam" id="PF04535">
    <property type="entry name" value="CASP_dom"/>
    <property type="match status" value="1"/>
</dbReference>
<keyword id="KW-1003">Cell membrane</keyword>
<keyword id="KW-0961">Cell wall biogenesis/degradation</keyword>
<keyword id="KW-0472">Membrane</keyword>
<keyword id="KW-0812">Transmembrane</keyword>
<keyword id="KW-1133">Transmembrane helix</keyword>
<proteinExistence type="evidence at transcript level"/>